<gene>
    <name evidence="1" type="primary">tsaC</name>
    <name type="synonym">rimN</name>
    <name type="ordered locus">Sbal195_0036</name>
</gene>
<proteinExistence type="inferred from homology"/>
<accession>A9KUA7</accession>
<dbReference type="EC" id="2.7.7.87" evidence="1"/>
<dbReference type="EMBL" id="CP000891">
    <property type="protein sequence ID" value="ABX47218.1"/>
    <property type="molecule type" value="Genomic_DNA"/>
</dbReference>
<dbReference type="RefSeq" id="WP_006084799.1">
    <property type="nucleotide sequence ID" value="NC_009997.1"/>
</dbReference>
<dbReference type="SMR" id="A9KUA7"/>
<dbReference type="KEGG" id="sbn:Sbal195_0036"/>
<dbReference type="HOGENOM" id="CLU_031397_6_0_6"/>
<dbReference type="Proteomes" id="UP000000770">
    <property type="component" value="Chromosome"/>
</dbReference>
<dbReference type="GO" id="GO:0005737">
    <property type="term" value="C:cytoplasm"/>
    <property type="evidence" value="ECO:0007669"/>
    <property type="project" value="UniProtKB-SubCell"/>
</dbReference>
<dbReference type="GO" id="GO:0005524">
    <property type="term" value="F:ATP binding"/>
    <property type="evidence" value="ECO:0007669"/>
    <property type="project" value="UniProtKB-UniRule"/>
</dbReference>
<dbReference type="GO" id="GO:0003725">
    <property type="term" value="F:double-stranded RNA binding"/>
    <property type="evidence" value="ECO:0007669"/>
    <property type="project" value="InterPro"/>
</dbReference>
<dbReference type="GO" id="GO:0061710">
    <property type="term" value="F:L-threonylcarbamoyladenylate synthase"/>
    <property type="evidence" value="ECO:0007669"/>
    <property type="project" value="UniProtKB-EC"/>
</dbReference>
<dbReference type="GO" id="GO:0000049">
    <property type="term" value="F:tRNA binding"/>
    <property type="evidence" value="ECO:0007669"/>
    <property type="project" value="TreeGrafter"/>
</dbReference>
<dbReference type="GO" id="GO:0006450">
    <property type="term" value="P:regulation of translational fidelity"/>
    <property type="evidence" value="ECO:0007669"/>
    <property type="project" value="TreeGrafter"/>
</dbReference>
<dbReference type="GO" id="GO:0002949">
    <property type="term" value="P:tRNA threonylcarbamoyladenosine modification"/>
    <property type="evidence" value="ECO:0007669"/>
    <property type="project" value="UniProtKB-UniRule"/>
</dbReference>
<dbReference type="FunFam" id="3.90.870.10:FF:000004">
    <property type="entry name" value="Threonylcarbamoyl-AMP synthase"/>
    <property type="match status" value="1"/>
</dbReference>
<dbReference type="Gene3D" id="3.90.870.10">
    <property type="entry name" value="DHBP synthase"/>
    <property type="match status" value="1"/>
</dbReference>
<dbReference type="HAMAP" id="MF_01852">
    <property type="entry name" value="TsaC"/>
    <property type="match status" value="1"/>
</dbReference>
<dbReference type="InterPro" id="IPR017945">
    <property type="entry name" value="DHBP_synth_RibB-like_a/b_dom"/>
</dbReference>
<dbReference type="InterPro" id="IPR006070">
    <property type="entry name" value="Sua5-like_dom"/>
</dbReference>
<dbReference type="InterPro" id="IPR023535">
    <property type="entry name" value="TC-AMP_synthase"/>
</dbReference>
<dbReference type="InterPro" id="IPR050156">
    <property type="entry name" value="TC-AMP_synthase_SUA5"/>
</dbReference>
<dbReference type="NCBIfam" id="TIGR00057">
    <property type="entry name" value="L-threonylcarbamoyladenylate synthase"/>
    <property type="match status" value="1"/>
</dbReference>
<dbReference type="PANTHER" id="PTHR17490">
    <property type="entry name" value="SUA5"/>
    <property type="match status" value="1"/>
</dbReference>
<dbReference type="PANTHER" id="PTHR17490:SF18">
    <property type="entry name" value="THREONYLCARBAMOYL-AMP SYNTHASE"/>
    <property type="match status" value="1"/>
</dbReference>
<dbReference type="Pfam" id="PF01300">
    <property type="entry name" value="Sua5_yciO_yrdC"/>
    <property type="match status" value="1"/>
</dbReference>
<dbReference type="SUPFAM" id="SSF55821">
    <property type="entry name" value="YrdC/RibB"/>
    <property type="match status" value="1"/>
</dbReference>
<dbReference type="PROSITE" id="PS51163">
    <property type="entry name" value="YRDC"/>
    <property type="match status" value="1"/>
</dbReference>
<comment type="function">
    <text evidence="1">Required for the formation of a threonylcarbamoyl group on adenosine at position 37 (t(6)A37) in tRNAs that read codons beginning with adenine. Catalyzes the conversion of L-threonine, HCO(3)(-)/CO(2) and ATP to give threonylcarbamoyl-AMP (TC-AMP) as the acyladenylate intermediate, with the release of diphosphate.</text>
</comment>
<comment type="catalytic activity">
    <reaction evidence="1">
        <text>L-threonine + hydrogencarbonate + ATP = L-threonylcarbamoyladenylate + diphosphate + H2O</text>
        <dbReference type="Rhea" id="RHEA:36407"/>
        <dbReference type="ChEBI" id="CHEBI:15377"/>
        <dbReference type="ChEBI" id="CHEBI:17544"/>
        <dbReference type="ChEBI" id="CHEBI:30616"/>
        <dbReference type="ChEBI" id="CHEBI:33019"/>
        <dbReference type="ChEBI" id="CHEBI:57926"/>
        <dbReference type="ChEBI" id="CHEBI:73682"/>
        <dbReference type="EC" id="2.7.7.87"/>
    </reaction>
</comment>
<comment type="subcellular location">
    <subcellularLocation>
        <location evidence="1">Cytoplasm</location>
    </subcellularLocation>
</comment>
<comment type="similarity">
    <text evidence="1">Belongs to the SUA5 family. TsaC subfamily.</text>
</comment>
<protein>
    <recommendedName>
        <fullName evidence="1">Threonylcarbamoyl-AMP synthase</fullName>
        <shortName evidence="1">TC-AMP synthase</shortName>
        <ecNumber evidence="1">2.7.7.87</ecNumber>
    </recommendedName>
    <alternativeName>
        <fullName evidence="1">L-threonylcarbamoyladenylate synthase</fullName>
    </alternativeName>
    <alternativeName>
        <fullName evidence="1">t(6)A37 threonylcarbamoyladenosine biosynthesis protein TsaC</fullName>
    </alternativeName>
    <alternativeName>
        <fullName evidence="1">tRNA threonylcarbamoyladenosine biosynthesis protein TsaC</fullName>
    </alternativeName>
</protein>
<feature type="chain" id="PRO_0000352977" description="Threonylcarbamoyl-AMP synthase">
    <location>
        <begin position="1"/>
        <end position="188"/>
    </location>
</feature>
<feature type="domain" description="YrdC-like" evidence="1">
    <location>
        <begin position="3"/>
        <end position="188"/>
    </location>
</feature>
<keyword id="KW-0067">ATP-binding</keyword>
<keyword id="KW-0963">Cytoplasm</keyword>
<keyword id="KW-0547">Nucleotide-binding</keyword>
<keyword id="KW-0548">Nucleotidyltransferase</keyword>
<keyword id="KW-0808">Transferase</keyword>
<keyword id="KW-0819">tRNA processing</keyword>
<evidence type="ECO:0000255" key="1">
    <source>
        <dbReference type="HAMAP-Rule" id="MF_01852"/>
    </source>
</evidence>
<sequence length="188" mass="20280">MLQLHPSDIKDIILQGGVIAYPTEAVYGLGCDPDNDTAILKLLAVKQRPWQKGLILVASDFQQLLAYVDESQLTAEQLEFAFSKWPGPFTFVMPIKAQVSKYLCGEFDSIAVRVSAHAGVQALCRALNKPLVSTSANLAGEDPALTAAEILADFTGKIDALVLGELGEQRQPSTIIDARSGKILRNGQ</sequence>
<name>TSAC_SHEB9</name>
<reference key="1">
    <citation type="submission" date="2007-11" db="EMBL/GenBank/DDBJ databases">
        <title>Complete sequence of chromosome of Shewanella baltica OS195.</title>
        <authorList>
            <consortium name="US DOE Joint Genome Institute"/>
            <person name="Copeland A."/>
            <person name="Lucas S."/>
            <person name="Lapidus A."/>
            <person name="Barry K."/>
            <person name="Glavina del Rio T."/>
            <person name="Dalin E."/>
            <person name="Tice H."/>
            <person name="Pitluck S."/>
            <person name="Chain P."/>
            <person name="Malfatti S."/>
            <person name="Shin M."/>
            <person name="Vergez L."/>
            <person name="Schmutz J."/>
            <person name="Larimer F."/>
            <person name="Land M."/>
            <person name="Hauser L."/>
            <person name="Kyrpides N."/>
            <person name="Kim E."/>
            <person name="Brettar I."/>
            <person name="Rodrigues J."/>
            <person name="Konstantinidis K."/>
            <person name="Klappenbach J."/>
            <person name="Hofle M."/>
            <person name="Tiedje J."/>
            <person name="Richardson P."/>
        </authorList>
    </citation>
    <scope>NUCLEOTIDE SEQUENCE [LARGE SCALE GENOMIC DNA]</scope>
    <source>
        <strain>OS195</strain>
    </source>
</reference>
<organism>
    <name type="scientific">Shewanella baltica (strain OS195)</name>
    <dbReference type="NCBI Taxonomy" id="399599"/>
    <lineage>
        <taxon>Bacteria</taxon>
        <taxon>Pseudomonadati</taxon>
        <taxon>Pseudomonadota</taxon>
        <taxon>Gammaproteobacteria</taxon>
        <taxon>Alteromonadales</taxon>
        <taxon>Shewanellaceae</taxon>
        <taxon>Shewanella</taxon>
    </lineage>
</organism>